<protein>
    <recommendedName>
        <fullName evidence="1">Aspartate--tRNA(Asp/Asn) ligase</fullName>
        <ecNumber evidence="1">6.1.1.23</ecNumber>
    </recommendedName>
    <alternativeName>
        <fullName evidence="1">Aspartyl-tRNA synthetase</fullName>
        <shortName evidence="1">AspRS</shortName>
    </alternativeName>
    <alternativeName>
        <fullName evidence="1">Non-discriminating aspartyl-tRNA synthetase</fullName>
        <shortName evidence="1">ND-AspRS</shortName>
    </alternativeName>
</protein>
<reference key="1">
    <citation type="journal article" date="2003" name="Nature">
        <title>Genome divergence in two Prochlorococcus ecotypes reflects oceanic niche differentiation.</title>
        <authorList>
            <person name="Rocap G."/>
            <person name="Larimer F.W."/>
            <person name="Lamerdin J.E."/>
            <person name="Malfatti S."/>
            <person name="Chain P."/>
            <person name="Ahlgren N.A."/>
            <person name="Arellano A."/>
            <person name="Coleman M."/>
            <person name="Hauser L."/>
            <person name="Hess W.R."/>
            <person name="Johnson Z.I."/>
            <person name="Land M.L."/>
            <person name="Lindell D."/>
            <person name="Post A.F."/>
            <person name="Regala W."/>
            <person name="Shah M."/>
            <person name="Shaw S.L."/>
            <person name="Steglich C."/>
            <person name="Sullivan M.B."/>
            <person name="Ting C.S."/>
            <person name="Tolonen A."/>
            <person name="Webb E.A."/>
            <person name="Zinser E.R."/>
            <person name="Chisholm S.W."/>
        </authorList>
    </citation>
    <scope>NUCLEOTIDE SEQUENCE [LARGE SCALE GENOMIC DNA]</scope>
    <source>
        <strain>MIT 9313</strain>
    </source>
</reference>
<evidence type="ECO:0000255" key="1">
    <source>
        <dbReference type="HAMAP-Rule" id="MF_00044"/>
    </source>
</evidence>
<gene>
    <name evidence="1" type="primary">aspS</name>
    <name type="ordered locus">PMT_2216</name>
</gene>
<feature type="chain" id="PRO_0000110922" description="Aspartate--tRNA(Asp/Asn) ligase">
    <location>
        <begin position="1"/>
        <end position="606"/>
    </location>
</feature>
<feature type="region of interest" description="Aspartate" evidence="1">
    <location>
        <begin position="201"/>
        <end position="204"/>
    </location>
</feature>
<feature type="binding site" evidence="1">
    <location>
        <position position="177"/>
    </location>
    <ligand>
        <name>L-aspartate</name>
        <dbReference type="ChEBI" id="CHEBI:29991"/>
    </ligand>
</feature>
<feature type="binding site" evidence="1">
    <location>
        <begin position="223"/>
        <end position="225"/>
    </location>
    <ligand>
        <name>ATP</name>
        <dbReference type="ChEBI" id="CHEBI:30616"/>
    </ligand>
</feature>
<feature type="binding site" evidence="1">
    <location>
        <position position="223"/>
    </location>
    <ligand>
        <name>L-aspartate</name>
        <dbReference type="ChEBI" id="CHEBI:29991"/>
    </ligand>
</feature>
<feature type="binding site" evidence="1">
    <location>
        <position position="232"/>
    </location>
    <ligand>
        <name>ATP</name>
        <dbReference type="ChEBI" id="CHEBI:30616"/>
    </ligand>
</feature>
<feature type="binding site" evidence="1">
    <location>
        <position position="461"/>
    </location>
    <ligand>
        <name>L-aspartate</name>
        <dbReference type="ChEBI" id="CHEBI:29991"/>
    </ligand>
</feature>
<feature type="binding site" evidence="1">
    <location>
        <position position="499"/>
    </location>
    <ligand>
        <name>ATP</name>
        <dbReference type="ChEBI" id="CHEBI:30616"/>
    </ligand>
</feature>
<feature type="binding site" evidence="1">
    <location>
        <position position="506"/>
    </location>
    <ligand>
        <name>L-aspartate</name>
        <dbReference type="ChEBI" id="CHEBI:29991"/>
    </ligand>
</feature>
<feature type="binding site" evidence="1">
    <location>
        <begin position="551"/>
        <end position="554"/>
    </location>
    <ligand>
        <name>ATP</name>
        <dbReference type="ChEBI" id="CHEBI:30616"/>
    </ligand>
</feature>
<feature type="site" description="Important for tRNA non-discrimination" evidence="1">
    <location>
        <position position="30"/>
    </location>
</feature>
<comment type="function">
    <text evidence="1">Aspartyl-tRNA synthetase with relaxed tRNA specificity since it is able to aspartylate not only its cognate tRNA(Asp) but also tRNA(Asn). Reaction proceeds in two steps: L-aspartate is first activated by ATP to form Asp-AMP and then transferred to the acceptor end of tRNA(Asp/Asn).</text>
</comment>
<comment type="catalytic activity">
    <reaction evidence="1">
        <text>tRNA(Asx) + L-aspartate + ATP = L-aspartyl-tRNA(Asx) + AMP + diphosphate</text>
        <dbReference type="Rhea" id="RHEA:18349"/>
        <dbReference type="Rhea" id="RHEA-COMP:9710"/>
        <dbReference type="Rhea" id="RHEA-COMP:9711"/>
        <dbReference type="ChEBI" id="CHEBI:29991"/>
        <dbReference type="ChEBI" id="CHEBI:30616"/>
        <dbReference type="ChEBI" id="CHEBI:33019"/>
        <dbReference type="ChEBI" id="CHEBI:78442"/>
        <dbReference type="ChEBI" id="CHEBI:78516"/>
        <dbReference type="ChEBI" id="CHEBI:456215"/>
        <dbReference type="EC" id="6.1.1.23"/>
    </reaction>
</comment>
<comment type="subunit">
    <text evidence="1">Homodimer.</text>
</comment>
<comment type="subcellular location">
    <subcellularLocation>
        <location evidence="1">Cytoplasm</location>
    </subcellularLocation>
</comment>
<comment type="similarity">
    <text evidence="1">Belongs to the class-II aminoacyl-tRNA synthetase family. Type 1 subfamily.</text>
</comment>
<accession>Q7V3X1</accession>
<organism>
    <name type="scientific">Prochlorococcus marinus (strain MIT 9313)</name>
    <dbReference type="NCBI Taxonomy" id="74547"/>
    <lineage>
        <taxon>Bacteria</taxon>
        <taxon>Bacillati</taxon>
        <taxon>Cyanobacteriota</taxon>
        <taxon>Cyanophyceae</taxon>
        <taxon>Synechococcales</taxon>
        <taxon>Prochlorococcaceae</taxon>
        <taxon>Prochlorococcus</taxon>
    </lineage>
</organism>
<proteinExistence type="inferred from homology"/>
<dbReference type="EC" id="6.1.1.23" evidence="1"/>
<dbReference type="EMBL" id="BX548175">
    <property type="protein sequence ID" value="CAE22390.1"/>
    <property type="molecule type" value="Genomic_DNA"/>
</dbReference>
<dbReference type="RefSeq" id="WP_011131580.1">
    <property type="nucleotide sequence ID" value="NC_005071.1"/>
</dbReference>
<dbReference type="SMR" id="Q7V3X1"/>
<dbReference type="KEGG" id="pmt:PMT_2216"/>
<dbReference type="eggNOG" id="COG0173">
    <property type="taxonomic scope" value="Bacteria"/>
</dbReference>
<dbReference type="HOGENOM" id="CLU_014330_3_2_3"/>
<dbReference type="OrthoDB" id="9802326at2"/>
<dbReference type="Proteomes" id="UP000001423">
    <property type="component" value="Chromosome"/>
</dbReference>
<dbReference type="GO" id="GO:0005737">
    <property type="term" value="C:cytoplasm"/>
    <property type="evidence" value="ECO:0007669"/>
    <property type="project" value="UniProtKB-SubCell"/>
</dbReference>
<dbReference type="GO" id="GO:0004815">
    <property type="term" value="F:aspartate-tRNA ligase activity"/>
    <property type="evidence" value="ECO:0007669"/>
    <property type="project" value="UniProtKB-UniRule"/>
</dbReference>
<dbReference type="GO" id="GO:0050560">
    <property type="term" value="F:aspartate-tRNA(Asn) ligase activity"/>
    <property type="evidence" value="ECO:0007669"/>
    <property type="project" value="UniProtKB-EC"/>
</dbReference>
<dbReference type="GO" id="GO:0005524">
    <property type="term" value="F:ATP binding"/>
    <property type="evidence" value="ECO:0007669"/>
    <property type="project" value="UniProtKB-UniRule"/>
</dbReference>
<dbReference type="GO" id="GO:0003676">
    <property type="term" value="F:nucleic acid binding"/>
    <property type="evidence" value="ECO:0007669"/>
    <property type="project" value="InterPro"/>
</dbReference>
<dbReference type="GO" id="GO:0006422">
    <property type="term" value="P:aspartyl-tRNA aminoacylation"/>
    <property type="evidence" value="ECO:0007669"/>
    <property type="project" value="UniProtKB-UniRule"/>
</dbReference>
<dbReference type="CDD" id="cd00777">
    <property type="entry name" value="AspRS_core"/>
    <property type="match status" value="1"/>
</dbReference>
<dbReference type="CDD" id="cd04317">
    <property type="entry name" value="EcAspRS_like_N"/>
    <property type="match status" value="1"/>
</dbReference>
<dbReference type="Gene3D" id="3.30.930.10">
    <property type="entry name" value="Bira Bifunctional Protein, Domain 2"/>
    <property type="match status" value="1"/>
</dbReference>
<dbReference type="Gene3D" id="3.30.1360.30">
    <property type="entry name" value="GAD-like domain"/>
    <property type="match status" value="1"/>
</dbReference>
<dbReference type="Gene3D" id="2.40.50.140">
    <property type="entry name" value="Nucleic acid-binding proteins"/>
    <property type="match status" value="1"/>
</dbReference>
<dbReference type="HAMAP" id="MF_00044">
    <property type="entry name" value="Asp_tRNA_synth_type1"/>
    <property type="match status" value="1"/>
</dbReference>
<dbReference type="InterPro" id="IPR004364">
    <property type="entry name" value="Aa-tRNA-synt_II"/>
</dbReference>
<dbReference type="InterPro" id="IPR006195">
    <property type="entry name" value="aa-tRNA-synth_II"/>
</dbReference>
<dbReference type="InterPro" id="IPR045864">
    <property type="entry name" value="aa-tRNA-synth_II/BPL/LPL"/>
</dbReference>
<dbReference type="InterPro" id="IPR004524">
    <property type="entry name" value="Asp-tRNA-ligase_1"/>
</dbReference>
<dbReference type="InterPro" id="IPR047089">
    <property type="entry name" value="Asp-tRNA-ligase_1_N"/>
</dbReference>
<dbReference type="InterPro" id="IPR002312">
    <property type="entry name" value="Asp/Asn-tRNA-synth_IIb"/>
</dbReference>
<dbReference type="InterPro" id="IPR047090">
    <property type="entry name" value="AspRS_core"/>
</dbReference>
<dbReference type="InterPro" id="IPR004115">
    <property type="entry name" value="GAD-like_sf"/>
</dbReference>
<dbReference type="InterPro" id="IPR029351">
    <property type="entry name" value="GAD_dom"/>
</dbReference>
<dbReference type="InterPro" id="IPR012340">
    <property type="entry name" value="NA-bd_OB-fold"/>
</dbReference>
<dbReference type="InterPro" id="IPR004365">
    <property type="entry name" value="NA-bd_OB_tRNA"/>
</dbReference>
<dbReference type="NCBIfam" id="TIGR00459">
    <property type="entry name" value="aspS_bact"/>
    <property type="match status" value="1"/>
</dbReference>
<dbReference type="NCBIfam" id="NF001750">
    <property type="entry name" value="PRK00476.1"/>
    <property type="match status" value="1"/>
</dbReference>
<dbReference type="PANTHER" id="PTHR22594:SF5">
    <property type="entry name" value="ASPARTATE--TRNA LIGASE, MITOCHONDRIAL"/>
    <property type="match status" value="1"/>
</dbReference>
<dbReference type="PANTHER" id="PTHR22594">
    <property type="entry name" value="ASPARTYL/LYSYL-TRNA SYNTHETASE"/>
    <property type="match status" value="1"/>
</dbReference>
<dbReference type="Pfam" id="PF02938">
    <property type="entry name" value="GAD"/>
    <property type="match status" value="1"/>
</dbReference>
<dbReference type="Pfam" id="PF00152">
    <property type="entry name" value="tRNA-synt_2"/>
    <property type="match status" value="1"/>
</dbReference>
<dbReference type="Pfam" id="PF01336">
    <property type="entry name" value="tRNA_anti-codon"/>
    <property type="match status" value="1"/>
</dbReference>
<dbReference type="PRINTS" id="PR01042">
    <property type="entry name" value="TRNASYNTHASP"/>
</dbReference>
<dbReference type="SUPFAM" id="SSF55681">
    <property type="entry name" value="Class II aaRS and biotin synthetases"/>
    <property type="match status" value="1"/>
</dbReference>
<dbReference type="SUPFAM" id="SSF55261">
    <property type="entry name" value="GAD domain-like"/>
    <property type="match status" value="1"/>
</dbReference>
<dbReference type="SUPFAM" id="SSF50249">
    <property type="entry name" value="Nucleic acid-binding proteins"/>
    <property type="match status" value="1"/>
</dbReference>
<dbReference type="PROSITE" id="PS50862">
    <property type="entry name" value="AA_TRNA_LIGASE_II"/>
    <property type="match status" value="1"/>
</dbReference>
<keyword id="KW-0030">Aminoacyl-tRNA synthetase</keyword>
<keyword id="KW-0067">ATP-binding</keyword>
<keyword id="KW-0963">Cytoplasm</keyword>
<keyword id="KW-0436">Ligase</keyword>
<keyword id="KW-0547">Nucleotide-binding</keyword>
<keyword id="KW-0648">Protein biosynthesis</keyword>
<keyword id="KW-1185">Reference proteome</keyword>
<sequence>MRSNGCGELRSKHIASNVKLCGWVDRCRDHGGVIFIDLRDRSGTIQITVDPDQGTELFASAESLRNETVLQITGLVRPRPADAINSKLSTGEIEVLANGLEVLNPVTGNLPFTVSIHDEEPVKEELRLRHRHLDLRRERMSRNLQLRHTTIKTARHFLEDEGFIEVETPVLTRSTPEGARDYLVPSRVCSGEWFALPQSPQLFKQLLMVGGLERYYQVARCFRDEDLRADRQPEFTQLDIEMSFMDQEQILKLNERLIAAIWKAVKGIDLPLPFPRLTWHEAMDRYGTDRPDTRYGMELNDVSDILKDMGFKVFSGAIAAGGSVKCITVPNGNDLISNVRIKPGGDIFNEAQKAGAGGLAFIRVRDSDEIDSIGAIKDNLNSKQKAALLKQTGAKAGDLILFGAGKTATVNSALDRVRQFLGRELGLIPTDQDNKLWQFLWVVDFPMFELNAEENRLEALHHPFCAPNKDDLGDDPDAWMERLPQARAQAYDLVLNGLELGGGSLRIHNAELQRQVLQTIGLPLEEAKQQFGFLIDALEMGAPPHGGLAFGMDRIVMLLTGEDSIRDTIAFPKTQQARCLMTQAPAGVSNHQLEELHVESTWVDPE</sequence>
<name>SYDND_PROMM</name>